<comment type="function">
    <text evidence="1">Catalyzes the attachment of glutamate to tRNA(Glu) in a two-step reaction: glutamate is first activated by ATP to form Glu-AMP and then transferred to the acceptor end of tRNA(Glu).</text>
</comment>
<comment type="catalytic activity">
    <reaction evidence="1">
        <text>tRNA(Glu) + L-glutamate + ATP = L-glutamyl-tRNA(Glu) + AMP + diphosphate</text>
        <dbReference type="Rhea" id="RHEA:23540"/>
        <dbReference type="Rhea" id="RHEA-COMP:9663"/>
        <dbReference type="Rhea" id="RHEA-COMP:9680"/>
        <dbReference type="ChEBI" id="CHEBI:29985"/>
        <dbReference type="ChEBI" id="CHEBI:30616"/>
        <dbReference type="ChEBI" id="CHEBI:33019"/>
        <dbReference type="ChEBI" id="CHEBI:78442"/>
        <dbReference type="ChEBI" id="CHEBI:78520"/>
        <dbReference type="ChEBI" id="CHEBI:456215"/>
        <dbReference type="EC" id="6.1.1.17"/>
    </reaction>
</comment>
<comment type="subunit">
    <text evidence="1">Monomer.</text>
</comment>
<comment type="subcellular location">
    <subcellularLocation>
        <location evidence="1">Cytoplasm</location>
    </subcellularLocation>
</comment>
<comment type="similarity">
    <text evidence="1">Belongs to the class-I aminoacyl-tRNA synthetase family. Glutamate--tRNA ligase type 1 subfamily.</text>
</comment>
<proteinExistence type="inferred from homology"/>
<name>SYE1_RUBXD</name>
<organism>
    <name type="scientific">Rubrobacter xylanophilus (strain DSM 9941 / JCM 11954 / NBRC 16129 / PRD-1)</name>
    <dbReference type="NCBI Taxonomy" id="266117"/>
    <lineage>
        <taxon>Bacteria</taxon>
        <taxon>Bacillati</taxon>
        <taxon>Actinomycetota</taxon>
        <taxon>Rubrobacteria</taxon>
        <taxon>Rubrobacterales</taxon>
        <taxon>Rubrobacteraceae</taxon>
        <taxon>Rubrobacter</taxon>
    </lineage>
</organism>
<reference key="1">
    <citation type="submission" date="2006-06" db="EMBL/GenBank/DDBJ databases">
        <title>Complete sequence of Rubrobacter xylanophilus DSM 9941.</title>
        <authorList>
            <consortium name="US DOE Joint Genome Institute"/>
            <person name="Copeland A."/>
            <person name="Lucas S."/>
            <person name="Lapidus A."/>
            <person name="Barry K."/>
            <person name="Detter J.C."/>
            <person name="Glavina del Rio T."/>
            <person name="Hammon N."/>
            <person name="Israni S."/>
            <person name="Dalin E."/>
            <person name="Tice H."/>
            <person name="Pitluck S."/>
            <person name="Munk A.C."/>
            <person name="Brettin T."/>
            <person name="Bruce D."/>
            <person name="Han C."/>
            <person name="Tapia R."/>
            <person name="Gilna P."/>
            <person name="Schmutz J."/>
            <person name="Larimer F."/>
            <person name="Land M."/>
            <person name="Hauser L."/>
            <person name="Kyrpides N."/>
            <person name="Lykidis A."/>
            <person name="da Costa M.S."/>
            <person name="Rainey F.A."/>
            <person name="Empadinhas N."/>
            <person name="Jolivet E."/>
            <person name="Battista J.R."/>
            <person name="Richardson P."/>
        </authorList>
    </citation>
    <scope>NUCLEOTIDE SEQUENCE [LARGE SCALE GENOMIC DNA]</scope>
    <source>
        <strain>DSM 9941 / JCM 11954 / NBRC 16129 / PRD-1</strain>
    </source>
</reference>
<evidence type="ECO:0000255" key="1">
    <source>
        <dbReference type="HAMAP-Rule" id="MF_00022"/>
    </source>
</evidence>
<keyword id="KW-0030">Aminoacyl-tRNA synthetase</keyword>
<keyword id="KW-0067">ATP-binding</keyword>
<keyword id="KW-0963">Cytoplasm</keyword>
<keyword id="KW-0436">Ligase</keyword>
<keyword id="KW-0547">Nucleotide-binding</keyword>
<keyword id="KW-0648">Protein biosynthesis</keyword>
<keyword id="KW-1185">Reference proteome</keyword>
<sequence length="431" mass="48343">MAPSVRARFAPSPTGDLHLGGARTALFNYLFARHHGGRLLLRIEDTDRQRSRREHEERILEDLGWLGLRFDEGPYRQSERGEVYAGYAGRLLEGGLAYEAEDASGRRAVYFRPPERGGAFRDALRGEVRFGGVRDFVILKSDGMPAYNFAAVVDDIEMEITHVIRGEEHLPNTGRQALLYRALGVPEPEFLHLGLILGPDGRKLSKRHGAQSVRGYREEGYLPEALLNYLALLGWTHPEGREEFSGLEELVAEWDPSRLGSSPARFDPQRLLYFNARHLRRLPARRLARLVEPFLEEPLPPGREEVAVEAVREELRLLSDAPRLLGRLLGPVDPGAAAGRPPGGAGEALAAASRLLESRRPEGLEEARELLAALRRWAKERGIKAREALHPLRVALTGEDRGPRLEYIIVLLGPEEAQKRIERAREARLRA</sequence>
<gene>
    <name evidence="1" type="primary">gltX1</name>
    <name type="ordered locus">Rxyl_2174</name>
</gene>
<feature type="chain" id="PRO_0000367765" description="Glutamate--tRNA ligase 1">
    <location>
        <begin position="1"/>
        <end position="431"/>
    </location>
</feature>
<feature type="short sequence motif" description="'HIGH' region" evidence="1">
    <location>
        <begin position="11"/>
        <end position="21"/>
    </location>
</feature>
<feature type="short sequence motif" description="'KMSKS' region" evidence="1">
    <location>
        <begin position="203"/>
        <end position="207"/>
    </location>
</feature>
<feature type="binding site" evidence="1">
    <location>
        <position position="206"/>
    </location>
    <ligand>
        <name>ATP</name>
        <dbReference type="ChEBI" id="CHEBI:30616"/>
    </ligand>
</feature>
<protein>
    <recommendedName>
        <fullName evidence="1">Glutamate--tRNA ligase 1</fullName>
        <ecNumber evidence="1">6.1.1.17</ecNumber>
    </recommendedName>
    <alternativeName>
        <fullName evidence="1">Glutamyl-tRNA synthetase 1</fullName>
        <shortName evidence="1">GluRS 1</shortName>
    </alternativeName>
</protein>
<dbReference type="EC" id="6.1.1.17" evidence="1"/>
<dbReference type="EMBL" id="CP000386">
    <property type="protein sequence ID" value="ABG05118.1"/>
    <property type="molecule type" value="Genomic_DNA"/>
</dbReference>
<dbReference type="RefSeq" id="WP_011565132.1">
    <property type="nucleotide sequence ID" value="NC_008148.1"/>
</dbReference>
<dbReference type="SMR" id="Q1AU10"/>
<dbReference type="STRING" id="266117.Rxyl_2174"/>
<dbReference type="KEGG" id="rxy:Rxyl_2174"/>
<dbReference type="eggNOG" id="COG0008">
    <property type="taxonomic scope" value="Bacteria"/>
</dbReference>
<dbReference type="HOGENOM" id="CLU_015768_6_3_11"/>
<dbReference type="OrthoDB" id="9807503at2"/>
<dbReference type="PhylomeDB" id="Q1AU10"/>
<dbReference type="Proteomes" id="UP000006637">
    <property type="component" value="Chromosome"/>
</dbReference>
<dbReference type="GO" id="GO:0005829">
    <property type="term" value="C:cytosol"/>
    <property type="evidence" value="ECO:0007669"/>
    <property type="project" value="TreeGrafter"/>
</dbReference>
<dbReference type="GO" id="GO:0005524">
    <property type="term" value="F:ATP binding"/>
    <property type="evidence" value="ECO:0007669"/>
    <property type="project" value="UniProtKB-UniRule"/>
</dbReference>
<dbReference type="GO" id="GO:0004818">
    <property type="term" value="F:glutamate-tRNA ligase activity"/>
    <property type="evidence" value="ECO:0007669"/>
    <property type="project" value="UniProtKB-UniRule"/>
</dbReference>
<dbReference type="GO" id="GO:0000049">
    <property type="term" value="F:tRNA binding"/>
    <property type="evidence" value="ECO:0007669"/>
    <property type="project" value="InterPro"/>
</dbReference>
<dbReference type="GO" id="GO:0008270">
    <property type="term" value="F:zinc ion binding"/>
    <property type="evidence" value="ECO:0007669"/>
    <property type="project" value="InterPro"/>
</dbReference>
<dbReference type="GO" id="GO:0006424">
    <property type="term" value="P:glutamyl-tRNA aminoacylation"/>
    <property type="evidence" value="ECO:0007669"/>
    <property type="project" value="UniProtKB-UniRule"/>
</dbReference>
<dbReference type="CDD" id="cd00808">
    <property type="entry name" value="GluRS_core"/>
    <property type="match status" value="1"/>
</dbReference>
<dbReference type="Gene3D" id="1.10.10.350">
    <property type="match status" value="1"/>
</dbReference>
<dbReference type="Gene3D" id="3.40.50.620">
    <property type="entry name" value="HUPs"/>
    <property type="match status" value="2"/>
</dbReference>
<dbReference type="HAMAP" id="MF_00022">
    <property type="entry name" value="Glu_tRNA_synth_type1"/>
    <property type="match status" value="1"/>
</dbReference>
<dbReference type="InterPro" id="IPR045462">
    <property type="entry name" value="aa-tRNA-synth_I_cd-bd"/>
</dbReference>
<dbReference type="InterPro" id="IPR020751">
    <property type="entry name" value="aa-tRNA-synth_I_codon-bd_sub2"/>
</dbReference>
<dbReference type="InterPro" id="IPR001412">
    <property type="entry name" value="aa-tRNA-synth_I_CS"/>
</dbReference>
<dbReference type="InterPro" id="IPR008925">
    <property type="entry name" value="aa_tRNA-synth_I_cd-bd_sf"/>
</dbReference>
<dbReference type="InterPro" id="IPR004527">
    <property type="entry name" value="Glu-tRNA-ligase_bac/mito"/>
</dbReference>
<dbReference type="InterPro" id="IPR000924">
    <property type="entry name" value="Glu/Gln-tRNA-synth"/>
</dbReference>
<dbReference type="InterPro" id="IPR020058">
    <property type="entry name" value="Glu/Gln-tRNA-synth_Ib_cat-dom"/>
</dbReference>
<dbReference type="InterPro" id="IPR049940">
    <property type="entry name" value="GluQ/Sye"/>
</dbReference>
<dbReference type="InterPro" id="IPR033910">
    <property type="entry name" value="GluRS_core"/>
</dbReference>
<dbReference type="InterPro" id="IPR014729">
    <property type="entry name" value="Rossmann-like_a/b/a_fold"/>
</dbReference>
<dbReference type="PANTHER" id="PTHR43311">
    <property type="entry name" value="GLUTAMATE--TRNA LIGASE"/>
    <property type="match status" value="1"/>
</dbReference>
<dbReference type="PANTHER" id="PTHR43311:SF2">
    <property type="entry name" value="GLUTAMATE--TRNA LIGASE, MITOCHONDRIAL-RELATED"/>
    <property type="match status" value="1"/>
</dbReference>
<dbReference type="Pfam" id="PF19269">
    <property type="entry name" value="Anticodon_2"/>
    <property type="match status" value="1"/>
</dbReference>
<dbReference type="Pfam" id="PF00749">
    <property type="entry name" value="tRNA-synt_1c"/>
    <property type="match status" value="2"/>
</dbReference>
<dbReference type="PRINTS" id="PR00987">
    <property type="entry name" value="TRNASYNTHGLU"/>
</dbReference>
<dbReference type="SUPFAM" id="SSF48163">
    <property type="entry name" value="An anticodon-binding domain of class I aminoacyl-tRNA synthetases"/>
    <property type="match status" value="1"/>
</dbReference>
<dbReference type="SUPFAM" id="SSF52374">
    <property type="entry name" value="Nucleotidylyl transferase"/>
    <property type="match status" value="1"/>
</dbReference>
<dbReference type="PROSITE" id="PS00178">
    <property type="entry name" value="AA_TRNA_LIGASE_I"/>
    <property type="match status" value="1"/>
</dbReference>
<accession>Q1AU10</accession>